<reference key="1">
    <citation type="journal article" date="1998" name="Science">
        <title>Genome sequence of the nematode C. elegans: a platform for investigating biology.</title>
        <authorList>
            <consortium name="The C. elegans sequencing consortium"/>
        </authorList>
    </citation>
    <scope>NUCLEOTIDE SEQUENCE [LARGE SCALE GENOMIC DNA]</scope>
    <source>
        <strain>Bristol N2</strain>
    </source>
</reference>
<reference key="2">
    <citation type="submission" date="2000-08" db="EMBL/GenBank/DDBJ databases">
        <title>The Caenorhabditis elegans transcriptome project, a complementary view of the genome.</title>
        <authorList>
            <person name="Kohara Y."/>
            <person name="Shin-i T."/>
            <person name="Suzuki Y."/>
            <person name="Sugano S."/>
            <person name="Potdevin M."/>
            <person name="Thierry-Mieg Y."/>
            <person name="Thierry-Mieg D."/>
            <person name="Thierry-Mieg J."/>
        </authorList>
    </citation>
    <scope>NUCLEOTIDE SEQUENCE [LARGE SCALE MRNA]</scope>
    <source>
        <strain>Bristol N2</strain>
    </source>
</reference>
<dbReference type="EMBL" id="Z81062">
    <property type="protein sequence ID" value="CAB02940.1"/>
    <property type="molecule type" value="Genomic_DNA"/>
</dbReference>
<dbReference type="EMBL" id="AF303270">
    <property type="protein sequence ID" value="AAG50228.1"/>
    <property type="molecule type" value="mRNA"/>
</dbReference>
<dbReference type="PIR" id="T20948">
    <property type="entry name" value="T20948"/>
</dbReference>
<dbReference type="RefSeq" id="NP_496663.3">
    <property type="nucleotide sequence ID" value="NM_064262.5"/>
</dbReference>
<dbReference type="SMR" id="O17811"/>
<dbReference type="BioGRID" id="40190">
    <property type="interactions" value="1"/>
</dbReference>
<dbReference type="FunCoup" id="O17811">
    <property type="interactions" value="1522"/>
</dbReference>
<dbReference type="STRING" id="6239.F15A4.10.1"/>
<dbReference type="PaxDb" id="6239-F15A4.10"/>
<dbReference type="PeptideAtlas" id="O17811"/>
<dbReference type="EnsemblMetazoa" id="F15A4.10.1">
    <property type="protein sequence ID" value="F15A4.10.1"/>
    <property type="gene ID" value="WBGene00008844"/>
</dbReference>
<dbReference type="GeneID" id="174889"/>
<dbReference type="KEGG" id="cel:CELE_F15A4.10"/>
<dbReference type="UCSC" id="F15A4.10">
    <property type="organism name" value="c. elegans"/>
</dbReference>
<dbReference type="AGR" id="WB:WBGene00008844"/>
<dbReference type="CTD" id="174889"/>
<dbReference type="WormBase" id="F15A4.10">
    <property type="protein sequence ID" value="CE15847"/>
    <property type="gene ID" value="WBGene00008844"/>
</dbReference>
<dbReference type="HOGENOM" id="CLU_2608189_0_0_1"/>
<dbReference type="InParanoid" id="O17811"/>
<dbReference type="PRO" id="PR:O17811"/>
<dbReference type="Proteomes" id="UP000001940">
    <property type="component" value="Chromosome II"/>
</dbReference>
<dbReference type="Bgee" id="WBGene00008844">
    <property type="expression patterns" value="Expressed in embryo and 4 other cell types or tissues"/>
</dbReference>
<protein>
    <recommendedName>
        <fullName>Uncharacterized protein F15A4.10</fullName>
    </recommendedName>
</protein>
<name>YSZI_CAEEL</name>
<keyword id="KW-1185">Reference proteome</keyword>
<sequence length="79" mass="9168">MSAQLQKIIADNSELIQEKSKKSDQDELGKRIDALLWEVDTLQKNIAETKEMCRRWGDERKREAAEFAKLLDSSDDDQN</sequence>
<gene>
    <name type="ORF">F15A4.10</name>
</gene>
<organism>
    <name type="scientific">Caenorhabditis elegans</name>
    <dbReference type="NCBI Taxonomy" id="6239"/>
    <lineage>
        <taxon>Eukaryota</taxon>
        <taxon>Metazoa</taxon>
        <taxon>Ecdysozoa</taxon>
        <taxon>Nematoda</taxon>
        <taxon>Chromadorea</taxon>
        <taxon>Rhabditida</taxon>
        <taxon>Rhabditina</taxon>
        <taxon>Rhabditomorpha</taxon>
        <taxon>Rhabditoidea</taxon>
        <taxon>Rhabditidae</taxon>
        <taxon>Peloderinae</taxon>
        <taxon>Caenorhabditis</taxon>
    </lineage>
</organism>
<accession>O17811</accession>
<feature type="chain" id="PRO_0000065296" description="Uncharacterized protein F15A4.10">
    <location>
        <begin position="1"/>
        <end position="79"/>
    </location>
</feature>
<proteinExistence type="predicted"/>